<accession>Q9NL39</accession>
<dbReference type="EMBL" id="AB032612">
    <property type="protein sequence ID" value="BAA90539.1"/>
    <property type="molecule type" value="mRNA"/>
</dbReference>
<dbReference type="PIR" id="JC7211">
    <property type="entry name" value="JC7211"/>
</dbReference>
<dbReference type="GO" id="GO:0005576">
    <property type="term" value="C:extracellular region"/>
    <property type="evidence" value="ECO:0007669"/>
    <property type="project" value="UniProtKB-KW"/>
</dbReference>
<keyword id="KW-0903">Direct protein sequencing</keyword>
<keyword id="KW-1015">Disulfide bond</keyword>
<keyword id="KW-0272">Extracellular matrix</keyword>
<keyword id="KW-0964">Secreted</keyword>
<keyword id="KW-0732">Signal</keyword>
<feature type="signal peptide" evidence="2">
    <location>
        <begin position="1"/>
        <end position="25"/>
    </location>
</feature>
<feature type="chain" id="PRO_0000379784" description="N14 matrix protein">
    <location>
        <begin position="26"/>
        <end position="140"/>
    </location>
</feature>
<feature type="sequence conflict" description="In Ref. 1; AA sequence." evidence="3" ref="1">
    <original>S</original>
    <variation>C</variation>
    <location>
        <position position="36"/>
    </location>
</feature>
<feature type="sequence conflict" description="In Ref. 1; AA sequence." evidence="3" ref="1">
    <original>L</original>
    <variation>I</variation>
    <location>
        <position position="38"/>
    </location>
</feature>
<protein>
    <recommendedName>
        <fullName>N14 matrix protein</fullName>
    </recommendedName>
</protein>
<proteinExistence type="evidence at protein level"/>
<name>MA14_PINMA</name>
<organism>
    <name type="scientific">Pinctada maxima</name>
    <name type="common">Silver-lipped pearl oyster</name>
    <name type="synonym">White-lipped pearl oyster</name>
    <dbReference type="NCBI Taxonomy" id="104660"/>
    <lineage>
        <taxon>Eukaryota</taxon>
        <taxon>Metazoa</taxon>
        <taxon>Spiralia</taxon>
        <taxon>Lophotrochozoa</taxon>
        <taxon>Mollusca</taxon>
        <taxon>Bivalvia</taxon>
        <taxon>Autobranchia</taxon>
        <taxon>Pteriomorphia</taxon>
        <taxon>Pterioida</taxon>
        <taxon>Pterioidea</taxon>
        <taxon>Pteriidae</taxon>
        <taxon>Pinctada</taxon>
    </lineage>
</organism>
<evidence type="ECO:0000250" key="1"/>
<evidence type="ECO:0000269" key="2">
    <source>
    </source>
</evidence>
<evidence type="ECO:0000305" key="3"/>
<comment type="function">
    <text evidence="2">May be specifically involved in the formation of the nacreous layer.</text>
</comment>
<comment type="subunit">
    <text evidence="1">Heterooligomer; disulfide-linked. Pif97, Pif80, N16 and other proteins form a complex (By similarity).</text>
</comment>
<comment type="subcellular location">
    <subcellularLocation>
        <location evidence="2">Secreted</location>
        <location evidence="2">Extracellular space</location>
        <location evidence="2">Extracellular matrix</location>
    </subcellularLocation>
</comment>
<comment type="tissue specificity">
    <text evidence="2">Component of conchiolin, the organic matrix of nacre. Only expressed in the dorsal region of the mantle.</text>
</comment>
<comment type="similarity">
    <text evidence="3">Belongs to the N16 matrix protein family.</text>
</comment>
<sequence length="140" mass="16361">MACTLRLTIAALVLLGICHLSRPVAAYQRCSRYWYSWLPYDIERDRYDDGYRKCCYCRNAWTPWQCREDEQFERMRCGSRYYTLCCYTDDDNGNGNGNGNGYGNGNGNGNGNNYLKYLFGGNGNGNGEYWEEYIDERYDK</sequence>
<reference key="1">
    <citation type="journal article" date="2000" name="Biochem. Biophys. Res. Commun.">
        <title>Molecular mechanism of the nacreous layer formation in Pinctada maxima.</title>
        <authorList>
            <person name="Kono M."/>
            <person name="Hayashi N."/>
            <person name="Samata T."/>
        </authorList>
    </citation>
    <scope>NUCLEOTIDE SEQUENCE [MRNA]</scope>
    <scope>PROTEIN SEQUENCE OF 26-40</scope>
    <scope>FUNCTION</scope>
    <scope>SUBCELLULAR LOCATION</scope>
    <scope>TISSUE SPECIFICITY</scope>
    <source>
        <tissue>Mantle</tissue>
        <tissue>Nacre</tissue>
    </source>
</reference>